<gene>
    <name evidence="1" type="primary">TAF13</name>
</gene>
<dbReference type="EMBL" id="CR859265">
    <property type="protein sequence ID" value="CAH91444.1"/>
    <property type="molecule type" value="mRNA"/>
</dbReference>
<dbReference type="RefSeq" id="NP_001125848.1">
    <property type="nucleotide sequence ID" value="NM_001132376.1"/>
</dbReference>
<dbReference type="SMR" id="Q5R9W6"/>
<dbReference type="FunCoup" id="Q5R9W6">
    <property type="interactions" value="2019"/>
</dbReference>
<dbReference type="STRING" id="9601.ENSPPYP00000001258"/>
<dbReference type="Ensembl" id="ENSPPYT00000001300.3">
    <property type="protein sequence ID" value="ENSPPYP00000001258.3"/>
    <property type="gene ID" value="ENSPPYG00000001084.3"/>
</dbReference>
<dbReference type="GeneID" id="100172778"/>
<dbReference type="KEGG" id="pon:100172778"/>
<dbReference type="CTD" id="6884"/>
<dbReference type="eggNOG" id="KOG3901">
    <property type="taxonomic scope" value="Eukaryota"/>
</dbReference>
<dbReference type="GeneTree" id="ENSGT00390000012981"/>
<dbReference type="HOGENOM" id="CLU_076665_4_0_1"/>
<dbReference type="InParanoid" id="Q5R9W6"/>
<dbReference type="OMA" id="CERAMNV"/>
<dbReference type="OrthoDB" id="10266074at2759"/>
<dbReference type="Proteomes" id="UP000001595">
    <property type="component" value="Chromosome 1"/>
</dbReference>
<dbReference type="GO" id="GO:0005730">
    <property type="term" value="C:nucleolus"/>
    <property type="evidence" value="ECO:0007669"/>
    <property type="project" value="Ensembl"/>
</dbReference>
<dbReference type="GO" id="GO:0005669">
    <property type="term" value="C:transcription factor TFIID complex"/>
    <property type="evidence" value="ECO:0007669"/>
    <property type="project" value="Ensembl"/>
</dbReference>
<dbReference type="GO" id="GO:0003677">
    <property type="term" value="F:DNA binding"/>
    <property type="evidence" value="ECO:0007669"/>
    <property type="project" value="Ensembl"/>
</dbReference>
<dbReference type="GO" id="GO:0046982">
    <property type="term" value="F:protein heterodimerization activity"/>
    <property type="evidence" value="ECO:0007669"/>
    <property type="project" value="InterPro"/>
</dbReference>
<dbReference type="GO" id="GO:0017025">
    <property type="term" value="F:TBP-class protein binding"/>
    <property type="evidence" value="ECO:0007669"/>
    <property type="project" value="Ensembl"/>
</dbReference>
<dbReference type="GO" id="GO:0042789">
    <property type="term" value="P:mRNA transcription by RNA polymerase II"/>
    <property type="evidence" value="ECO:0007669"/>
    <property type="project" value="Ensembl"/>
</dbReference>
<dbReference type="GO" id="GO:0060261">
    <property type="term" value="P:positive regulation of transcription initiation by RNA polymerase II"/>
    <property type="evidence" value="ECO:0007669"/>
    <property type="project" value="Ensembl"/>
</dbReference>
<dbReference type="GO" id="GO:0051123">
    <property type="term" value="P:RNA polymerase II preinitiation complex assembly"/>
    <property type="evidence" value="ECO:0007669"/>
    <property type="project" value="Ensembl"/>
</dbReference>
<dbReference type="CDD" id="cd07978">
    <property type="entry name" value="HFD_TAF13"/>
    <property type="match status" value="1"/>
</dbReference>
<dbReference type="FunFam" id="1.10.20.10:FF:000028">
    <property type="entry name" value="Transcription initiation factor TFIID subunit 13"/>
    <property type="match status" value="1"/>
</dbReference>
<dbReference type="Gene3D" id="1.10.20.10">
    <property type="entry name" value="Histone, subunit A"/>
    <property type="match status" value="1"/>
</dbReference>
<dbReference type="InterPro" id="IPR009072">
    <property type="entry name" value="Histone-fold"/>
</dbReference>
<dbReference type="InterPro" id="IPR003195">
    <property type="entry name" value="TFIID_TAF13"/>
</dbReference>
<dbReference type="PANTHER" id="PTHR11380:SF5">
    <property type="entry name" value="TRANSCRIPTION INITIATION FACTOR TFIID SUBUNIT 13"/>
    <property type="match status" value="1"/>
</dbReference>
<dbReference type="PANTHER" id="PTHR11380">
    <property type="entry name" value="TRANSCRIPTION INITIATION FACTOR TFIID/SUPT3-RELATED"/>
    <property type="match status" value="1"/>
</dbReference>
<dbReference type="Pfam" id="PF02269">
    <property type="entry name" value="TFIID-18kDa"/>
    <property type="match status" value="1"/>
</dbReference>
<dbReference type="SUPFAM" id="SSF47113">
    <property type="entry name" value="Histone-fold"/>
    <property type="match status" value="1"/>
</dbReference>
<accession>Q5R9W6</accession>
<proteinExistence type="evidence at transcript level"/>
<sequence length="124" mass="14287">MADEEEDPTFEEENEEIGGGAEGGQGKRKRLFSKELRCMMYGFGDDQNPYTESVDILEDLVIEFITEMTHKAMSIGRQGRVQVEDIVFLIRKDPRKFARVKDLLTMNEELKRARKAFDEANYGS</sequence>
<comment type="function">
    <text evidence="1">The TFIID basal transcription factor complex plays a major role in the initiation of RNA polymerase II (Pol II)-dependent transcription. TFIID recognizes and binds promoters via its subunit TBP, a TATA-box-binding protein, and promotes assembly of the pre-initiation complex (PIC). The TFIID complex consists of TBP and TBP-associated factors (TAFs), including TAF1, TAF2, TAF3, TAF4, TAF5, TAF6, TAF7, TAF8, TAF9, TAF10, TAF11, TAF12 and TAF13. TAF13, together with TAF11 and TBP, play key roles during promoter binding by the TFIID and TFIIA transcription factor complexes.</text>
</comment>
<comment type="subunit">
    <text evidence="1">Component of the TFIID basal transcription factor complex, composed of TATA-box-binding protein TBP, and a number of TBP-associated factors (TAFs), including TAF1, TAF2, TAF3, TAF4, TAF5, TAF6, TAF7, TAF8, TAF9, TAF10, TAF11, TAF12 and TAF13. Interacts with TBP, and more strongly with TAF10 and TAF11.</text>
</comment>
<comment type="subcellular location">
    <subcellularLocation>
        <location evidence="1">Nucleus</location>
    </subcellularLocation>
</comment>
<comment type="domain">
    <text evidence="1">The binding of TAF10 and TAF11 requires distinct domains of TAF13.</text>
</comment>
<comment type="similarity">
    <text evidence="3">Belongs to the TAF13 family.</text>
</comment>
<name>TAF13_PONAB</name>
<keyword id="KW-0539">Nucleus</keyword>
<keyword id="KW-1185">Reference proteome</keyword>
<keyword id="KW-0804">Transcription</keyword>
<keyword id="KW-0805">Transcription regulation</keyword>
<protein>
    <recommendedName>
        <fullName evidence="1">Transcription initiation factor TFIID subunit 13</fullName>
    </recommendedName>
    <alternativeName>
        <fullName evidence="1">Transcription initiation factor TFIID 18 kDa subunit</fullName>
        <shortName evidence="1">TAF(II)18</shortName>
        <shortName evidence="1">TAFII-18</shortName>
        <shortName evidence="1">TAFII18</shortName>
    </alternativeName>
</protein>
<evidence type="ECO:0000250" key="1">
    <source>
        <dbReference type="UniProtKB" id="Q15543"/>
    </source>
</evidence>
<evidence type="ECO:0000256" key="2">
    <source>
        <dbReference type="SAM" id="MobiDB-lite"/>
    </source>
</evidence>
<evidence type="ECO:0000305" key="3"/>
<reference key="1">
    <citation type="submission" date="2004-11" db="EMBL/GenBank/DDBJ databases">
        <authorList>
            <consortium name="The German cDNA consortium"/>
        </authorList>
    </citation>
    <scope>NUCLEOTIDE SEQUENCE [LARGE SCALE MRNA]</scope>
    <source>
        <tissue>Kidney</tissue>
    </source>
</reference>
<feature type="chain" id="PRO_0000268199" description="Transcription initiation factor TFIID subunit 13">
    <location>
        <begin position="1"/>
        <end position="124"/>
    </location>
</feature>
<feature type="domain" description="Histone-fold" evidence="3">
    <location>
        <begin position="32"/>
        <end position="74"/>
    </location>
</feature>
<feature type="region of interest" description="Disordered" evidence="2">
    <location>
        <begin position="1"/>
        <end position="28"/>
    </location>
</feature>
<feature type="compositionally biased region" description="Acidic residues" evidence="2">
    <location>
        <begin position="1"/>
        <end position="16"/>
    </location>
</feature>
<organism>
    <name type="scientific">Pongo abelii</name>
    <name type="common">Sumatran orangutan</name>
    <name type="synonym">Pongo pygmaeus abelii</name>
    <dbReference type="NCBI Taxonomy" id="9601"/>
    <lineage>
        <taxon>Eukaryota</taxon>
        <taxon>Metazoa</taxon>
        <taxon>Chordata</taxon>
        <taxon>Craniata</taxon>
        <taxon>Vertebrata</taxon>
        <taxon>Euteleostomi</taxon>
        <taxon>Mammalia</taxon>
        <taxon>Eutheria</taxon>
        <taxon>Euarchontoglires</taxon>
        <taxon>Primates</taxon>
        <taxon>Haplorrhini</taxon>
        <taxon>Catarrhini</taxon>
        <taxon>Hominidae</taxon>
        <taxon>Pongo</taxon>
    </lineage>
</organism>